<protein>
    <recommendedName>
        <fullName evidence="10">Large ribosomal subunit protein mL46</fullName>
    </recommendedName>
    <alternativeName>
        <fullName>54S ribosomal protein L17, mitochondrial</fullName>
    </alternativeName>
    <alternativeName>
        <fullName>YmL17/YmL30</fullName>
    </alternativeName>
</protein>
<accession>P36528</accession>
<accession>D6W0U1</accession>
<gene>
    <name type="primary">MRPL17</name>
    <name type="synonym">MRPL30</name>
    <name type="ordered locus">YNL252C</name>
    <name type="ORF">N0864</name>
</gene>
<keyword id="KW-0002">3D-structure</keyword>
<keyword id="KW-0903">Direct protein sequencing</keyword>
<keyword id="KW-0496">Mitochondrion</keyword>
<keyword id="KW-1185">Reference proteome</keyword>
<keyword id="KW-0687">Ribonucleoprotein</keyword>
<keyword id="KW-0689">Ribosomal protein</keyword>
<keyword id="KW-0809">Transit peptide</keyword>
<reference key="1">
    <citation type="journal article" date="1997" name="Yeast">
        <title>Sequence analysis of the 33 kb long region between ORC5 and SUI1 from the left arm of chromosome XIV from Saccharomyces cerevisiae.</title>
        <authorList>
            <person name="Sen-Gupta M."/>
            <person name="Gueldener U."/>
            <person name="Beinhauer J.D."/>
            <person name="Fiedler T.A."/>
            <person name="Hegemann J.H."/>
        </authorList>
    </citation>
    <scope>NUCLEOTIDE SEQUENCE [GENOMIC DNA]</scope>
    <source>
        <strain>ATCC 96604 / S288c / FY1679</strain>
    </source>
</reference>
<reference key="2">
    <citation type="journal article" date="1997" name="Nature">
        <title>The nucleotide sequence of Saccharomyces cerevisiae chromosome XIV and its evolutionary implications.</title>
        <authorList>
            <person name="Philippsen P."/>
            <person name="Kleine K."/>
            <person name="Poehlmann R."/>
            <person name="Duesterhoeft A."/>
            <person name="Hamberg K."/>
            <person name="Hegemann J.H."/>
            <person name="Obermaier B."/>
            <person name="Urrestarazu L.A."/>
            <person name="Aert R."/>
            <person name="Albermann K."/>
            <person name="Altmann R."/>
            <person name="Andre B."/>
            <person name="Baladron V."/>
            <person name="Ballesta J.P.G."/>
            <person name="Becam A.-M."/>
            <person name="Beinhauer J.D."/>
            <person name="Boskovic J."/>
            <person name="Buitrago M.J."/>
            <person name="Bussereau F."/>
            <person name="Coster F."/>
            <person name="Crouzet M."/>
            <person name="D'Angelo M."/>
            <person name="Dal Pero F."/>
            <person name="De Antoni A."/>
            <person name="del Rey F."/>
            <person name="Doignon F."/>
            <person name="Domdey H."/>
            <person name="Dubois E."/>
            <person name="Fiedler T.A."/>
            <person name="Fleig U."/>
            <person name="Floeth M."/>
            <person name="Fritz C."/>
            <person name="Gaillardin C."/>
            <person name="Garcia-Cantalejo J.M."/>
            <person name="Glansdorff N."/>
            <person name="Goffeau A."/>
            <person name="Gueldener U."/>
            <person name="Herbert C.J."/>
            <person name="Heumann K."/>
            <person name="Heuss-Neitzel D."/>
            <person name="Hilbert H."/>
            <person name="Hinni K."/>
            <person name="Iraqui Houssaini I."/>
            <person name="Jacquet M."/>
            <person name="Jimenez A."/>
            <person name="Jonniaux J.-L."/>
            <person name="Karpfinger-Hartl L."/>
            <person name="Lanfranchi G."/>
            <person name="Lepingle A."/>
            <person name="Levesque H."/>
            <person name="Lyck R."/>
            <person name="Maftahi M."/>
            <person name="Mallet L."/>
            <person name="Maurer C.T.C."/>
            <person name="Messenguy F."/>
            <person name="Mewes H.-W."/>
            <person name="Moestl D."/>
            <person name="Nasr F."/>
            <person name="Nicaud J.-M."/>
            <person name="Niedenthal R.K."/>
            <person name="Pandolfo D."/>
            <person name="Pierard A."/>
            <person name="Piravandi E."/>
            <person name="Planta R.J."/>
            <person name="Pohl T.M."/>
            <person name="Purnelle B."/>
            <person name="Rebischung C."/>
            <person name="Remacha M.A."/>
            <person name="Revuelta J.L."/>
            <person name="Rinke M."/>
            <person name="Saiz J.E."/>
            <person name="Sartorello F."/>
            <person name="Scherens B."/>
            <person name="Sen-Gupta M."/>
            <person name="Soler-Mira A."/>
            <person name="Urbanus J.H.M."/>
            <person name="Valle G."/>
            <person name="Van Dyck L."/>
            <person name="Verhasselt P."/>
            <person name="Vierendeels F."/>
            <person name="Vissers S."/>
            <person name="Voet M."/>
            <person name="Volckaert G."/>
            <person name="Wach A."/>
            <person name="Wambutt R."/>
            <person name="Wedler H."/>
            <person name="Zollner A."/>
            <person name="Hani J."/>
        </authorList>
    </citation>
    <scope>NUCLEOTIDE SEQUENCE [LARGE SCALE GENOMIC DNA]</scope>
    <source>
        <strain>ATCC 204508 / S288c</strain>
    </source>
</reference>
<reference key="3">
    <citation type="journal article" date="2014" name="G3 (Bethesda)">
        <title>The reference genome sequence of Saccharomyces cerevisiae: Then and now.</title>
        <authorList>
            <person name="Engel S.R."/>
            <person name="Dietrich F.S."/>
            <person name="Fisk D.G."/>
            <person name="Binkley G."/>
            <person name="Balakrishnan R."/>
            <person name="Costanzo M.C."/>
            <person name="Dwight S.S."/>
            <person name="Hitz B.C."/>
            <person name="Karra K."/>
            <person name="Nash R.S."/>
            <person name="Weng S."/>
            <person name="Wong E.D."/>
            <person name="Lloyd P."/>
            <person name="Skrzypek M.S."/>
            <person name="Miyasato S.R."/>
            <person name="Simison M."/>
            <person name="Cherry J.M."/>
        </authorList>
    </citation>
    <scope>GENOME REANNOTATION</scope>
    <source>
        <strain>ATCC 204508 / S288c</strain>
    </source>
</reference>
<reference key="4">
    <citation type="journal article" date="2007" name="Genome Res.">
        <title>Approaching a complete repository of sequence-verified protein-encoding clones for Saccharomyces cerevisiae.</title>
        <authorList>
            <person name="Hu Y."/>
            <person name="Rolfs A."/>
            <person name="Bhullar B."/>
            <person name="Murthy T.V.S."/>
            <person name="Zhu C."/>
            <person name="Berger M.F."/>
            <person name="Camargo A.A."/>
            <person name="Kelley F."/>
            <person name="McCarron S."/>
            <person name="Jepson D."/>
            <person name="Richardson A."/>
            <person name="Raphael J."/>
            <person name="Moreira D."/>
            <person name="Taycher E."/>
            <person name="Zuo D."/>
            <person name="Mohr S."/>
            <person name="Kane M.F."/>
            <person name="Williamson J."/>
            <person name="Simpson A.J.G."/>
            <person name="Bulyk M.L."/>
            <person name="Harlow E."/>
            <person name="Marsischky G."/>
            <person name="Kolodner R.D."/>
            <person name="LaBaer J."/>
        </authorList>
    </citation>
    <scope>NUCLEOTIDE SEQUENCE [GENOMIC DNA]</scope>
    <source>
        <strain>ATCC 204508 / S288c</strain>
    </source>
</reference>
<reference key="5">
    <citation type="journal article" date="1991" name="FEBS Lett.">
        <title>Extended N-terminal sequencing of proteins of the large ribosomal subunit from yeast mitochondria.</title>
        <authorList>
            <person name="Grohmann L."/>
            <person name="Graack H.-R."/>
            <person name="Kruft V."/>
            <person name="Choli T."/>
            <person name="Goldschmidt-Reisin S."/>
            <person name="Kitakawa M."/>
        </authorList>
    </citation>
    <scope>PROTEIN SEQUENCE OF 20-40</scope>
    <scope>SUBUNIT</scope>
    <source>
        <strain>07173</strain>
    </source>
</reference>
<reference key="6">
    <citation type="journal article" date="1997" name="Eur. J. Biochem.">
        <title>Identification and characterization of the genes for mitochondrial ribosomal proteins of Saccharomyces cerevisiae.</title>
        <authorList>
            <person name="Kitakawa M."/>
            <person name="Graack H.-R."/>
            <person name="Grohmann L."/>
            <person name="Goldschmidt-Reisin S."/>
            <person name="Herfurth E."/>
            <person name="Wittmann-Liebold B."/>
            <person name="Nishimura T."/>
            <person name="Isono K."/>
        </authorList>
    </citation>
    <scope>PROTEIN SEQUENCE OF 157-169</scope>
    <scope>SUBUNIT</scope>
    <source>
        <strain>07173</strain>
    </source>
</reference>
<reference key="7">
    <citation type="journal article" date="2002" name="Eur. J. Biochem.">
        <title>Tag-mediated isolation of yeast mitochondrial ribosome and mass spectrometric identification of its new components.</title>
        <authorList>
            <person name="Gan X."/>
            <person name="Kitakawa M."/>
            <person name="Yoshino K."/>
            <person name="Oshiro N."/>
            <person name="Yonezawa K."/>
            <person name="Isono K."/>
        </authorList>
    </citation>
    <scope>IDENTIFICATION IN THE MITOCHONDRIAL RIBOSOMAL LARGE COMPLEX</scope>
    <scope>IDENTIFICATION BY MASS SPECTROMETRY</scope>
</reference>
<reference key="8">
    <citation type="journal article" date="2003" name="Nature">
        <title>Global analysis of protein localization in budding yeast.</title>
        <authorList>
            <person name="Huh W.-K."/>
            <person name="Falvo J.V."/>
            <person name="Gerke L.C."/>
            <person name="Carroll A.S."/>
            <person name="Howson R.W."/>
            <person name="Weissman J.S."/>
            <person name="O'Shea E.K."/>
        </authorList>
    </citation>
    <scope>SUBCELLULAR LOCATION [LARGE SCALE ANALYSIS]</scope>
</reference>
<reference key="9">
    <citation type="journal article" date="2003" name="Nature">
        <title>Global analysis of protein expression in yeast.</title>
        <authorList>
            <person name="Ghaemmaghami S."/>
            <person name="Huh W.-K."/>
            <person name="Bower K."/>
            <person name="Howson R.W."/>
            <person name="Belle A."/>
            <person name="Dephoure N."/>
            <person name="O'Shea E.K."/>
            <person name="Weissman J.S."/>
        </authorList>
    </citation>
    <scope>LEVEL OF PROTEIN EXPRESSION [LARGE SCALE ANALYSIS]</scope>
</reference>
<reference key="10">
    <citation type="journal article" date="2003" name="Proc. Natl. Acad. Sci. U.S.A.">
        <title>The proteome of Saccharomyces cerevisiae mitochondria.</title>
        <authorList>
            <person name="Sickmann A."/>
            <person name="Reinders J."/>
            <person name="Wagner Y."/>
            <person name="Joppich C."/>
            <person name="Zahedi R.P."/>
            <person name="Meyer H.E."/>
            <person name="Schoenfisch B."/>
            <person name="Perschil I."/>
            <person name="Chacinska A."/>
            <person name="Guiard B."/>
            <person name="Rehling P."/>
            <person name="Pfanner N."/>
            <person name="Meisinger C."/>
        </authorList>
    </citation>
    <scope>SUBCELLULAR LOCATION [LARGE SCALE ANALYSIS]</scope>
    <source>
        <strain>ATCC 76625 / YPH499</strain>
    </source>
</reference>
<reference key="11">
    <citation type="journal article" date="2015" name="Nat. Commun.">
        <title>Organization of the mitochondrial translation machinery studied in situ by cryoelectron tomography.</title>
        <authorList>
            <person name="Pfeffer S."/>
            <person name="Woellhaf M.W."/>
            <person name="Herrmann J.M."/>
            <person name="Forster F."/>
        </authorList>
    </citation>
    <scope>SUBCELLULAR LOCATION</scope>
</reference>
<reference key="12">
    <citation type="journal article" date="2014" name="Science">
        <title>Structure of the yeast mitochondrial large ribosomal subunit.</title>
        <authorList>
            <person name="Amunts A."/>
            <person name="Brown A."/>
            <person name="Bai X.C."/>
            <person name="Llacer J.L."/>
            <person name="Hussain T."/>
            <person name="Emsley P."/>
            <person name="Long F."/>
            <person name="Murshudov G."/>
            <person name="Scheres S.H."/>
            <person name="Ramakrishnan V."/>
        </authorList>
    </citation>
    <scope>STRUCTURE BY ELECTRON MICROSCOPY (3.20 ANGSTROMS)</scope>
    <scope>SUBUNIT</scope>
</reference>
<organism>
    <name type="scientific">Saccharomyces cerevisiae (strain ATCC 204508 / S288c)</name>
    <name type="common">Baker's yeast</name>
    <dbReference type="NCBI Taxonomy" id="559292"/>
    <lineage>
        <taxon>Eukaryota</taxon>
        <taxon>Fungi</taxon>
        <taxon>Dikarya</taxon>
        <taxon>Ascomycota</taxon>
        <taxon>Saccharomycotina</taxon>
        <taxon>Saccharomycetes</taxon>
        <taxon>Saccharomycetales</taxon>
        <taxon>Saccharomycetaceae</taxon>
        <taxon>Saccharomyces</taxon>
    </lineage>
</organism>
<comment type="function">
    <text evidence="12 13">Component of the mitochondrial ribosome (mitoribosome), a dedicated translation machinery responsible for the synthesis of mitochondrial genome-encoded proteins, including at least some of the essential transmembrane subunits of the mitochondrial respiratory chain. The mitoribosomes are attached to the mitochondrial inner membrane and translation products are cotranslationally integrated into the membrane.</text>
</comment>
<comment type="subunit">
    <text evidence="2 6 7 9">Component of the mitochondrial large ribosomal subunit (mt-LSU). Mature yeast 74S mitochondrial ribosomes consist of a small (37S) and a large (54S) subunit. The 37S small subunit contains a 15S ribosomal RNA (15S mt-rRNA) and 34 different proteins. The 54S large subunit contains a 21S rRNA (21S mt-rRNA) and 46 different proteins.</text>
</comment>
<comment type="subcellular location">
    <subcellularLocation>
        <location evidence="3 5">Mitochondrion</location>
    </subcellularLocation>
    <text evidence="8">Mitoribosomes are tethered to the mitochondrial inner membrane and spatially aligned with the membrane insertion machinery through two distinct membrane contact sites, formed by the 21S rRNA expansion segment 96-ES1 and the inner membrane protein MBA1.</text>
</comment>
<comment type="miscellaneous">
    <text evidence="4">Present with 7400 molecules/cell in log phase SD medium.</text>
</comment>
<comment type="similarity">
    <text evidence="11">Belongs to the mitochondrion-specific ribosomal protein mL46 family.</text>
</comment>
<feature type="transit peptide" description="Mitochondrion" evidence="6">
    <location>
        <begin position="1"/>
        <end position="19"/>
    </location>
</feature>
<feature type="chain" id="PRO_0000030578" description="Large ribosomal subunit protein mL46">
    <location>
        <begin position="20"/>
        <end position="281"/>
    </location>
</feature>
<feature type="region of interest" description="Disordered" evidence="1">
    <location>
        <begin position="106"/>
        <end position="141"/>
    </location>
</feature>
<feature type="compositionally biased region" description="Basic and acidic residues" evidence="1">
    <location>
        <begin position="106"/>
        <end position="118"/>
    </location>
</feature>
<feature type="compositionally biased region" description="Polar residues" evidence="1">
    <location>
        <begin position="119"/>
        <end position="129"/>
    </location>
</feature>
<proteinExistence type="evidence at protein level"/>
<dbReference type="EMBL" id="X96722">
    <property type="protein sequence ID" value="CAA65492.1"/>
    <property type="molecule type" value="Genomic_DNA"/>
</dbReference>
<dbReference type="EMBL" id="Z71528">
    <property type="protein sequence ID" value="CAA96159.1"/>
    <property type="molecule type" value="Genomic_DNA"/>
</dbReference>
<dbReference type="EMBL" id="AY558015">
    <property type="protein sequence ID" value="AAS56341.1"/>
    <property type="molecule type" value="Genomic_DNA"/>
</dbReference>
<dbReference type="EMBL" id="BK006947">
    <property type="protein sequence ID" value="DAA10307.1"/>
    <property type="molecule type" value="Genomic_DNA"/>
</dbReference>
<dbReference type="PIR" id="S63225">
    <property type="entry name" value="S63225"/>
</dbReference>
<dbReference type="RefSeq" id="NP_014147.1">
    <property type="nucleotide sequence ID" value="NM_001183090.1"/>
</dbReference>
<dbReference type="PDB" id="3J6B">
    <property type="method" value="EM"/>
    <property type="resolution" value="3.20 A"/>
    <property type="chains" value="6=1-281"/>
</dbReference>
<dbReference type="PDB" id="5MRC">
    <property type="method" value="EM"/>
    <property type="resolution" value="3.25 A"/>
    <property type="chains" value="6=1-281"/>
</dbReference>
<dbReference type="PDB" id="5MRE">
    <property type="method" value="EM"/>
    <property type="resolution" value="3.75 A"/>
    <property type="chains" value="6=1-281"/>
</dbReference>
<dbReference type="PDB" id="5MRF">
    <property type="method" value="EM"/>
    <property type="resolution" value="4.97 A"/>
    <property type="chains" value="6=1-281"/>
</dbReference>
<dbReference type="PDBsum" id="3J6B"/>
<dbReference type="PDBsum" id="5MRC"/>
<dbReference type="PDBsum" id="5MRE"/>
<dbReference type="PDBsum" id="5MRF"/>
<dbReference type="EMDB" id="EMD-3551"/>
<dbReference type="EMDB" id="EMD-3552"/>
<dbReference type="EMDB" id="EMD-3553"/>
<dbReference type="SMR" id="P36528"/>
<dbReference type="BioGRID" id="35587">
    <property type="interactions" value="616"/>
</dbReference>
<dbReference type="ComplexPortal" id="CPX-1602">
    <property type="entry name" value="54S mitochondrial large ribosomal subunit"/>
</dbReference>
<dbReference type="DIP" id="DIP-4278N"/>
<dbReference type="FunCoup" id="P36528">
    <property type="interactions" value="580"/>
</dbReference>
<dbReference type="IntAct" id="P36528">
    <property type="interactions" value="73"/>
</dbReference>
<dbReference type="MINT" id="P36528"/>
<dbReference type="STRING" id="4932.YNL252C"/>
<dbReference type="iPTMnet" id="P36528"/>
<dbReference type="PaxDb" id="4932-YNL252C"/>
<dbReference type="PeptideAtlas" id="P36528"/>
<dbReference type="EnsemblFungi" id="YNL252C_mRNA">
    <property type="protein sequence ID" value="YNL252C"/>
    <property type="gene ID" value="YNL252C"/>
</dbReference>
<dbReference type="GeneID" id="855469"/>
<dbReference type="KEGG" id="sce:YNL252C"/>
<dbReference type="AGR" id="SGD:S000005196"/>
<dbReference type="SGD" id="S000005196">
    <property type="gene designation" value="MRPL17"/>
</dbReference>
<dbReference type="VEuPathDB" id="FungiDB:YNL252C"/>
<dbReference type="eggNOG" id="KOG4548">
    <property type="taxonomic scope" value="Eukaryota"/>
</dbReference>
<dbReference type="GeneTree" id="ENSGT00390000015400"/>
<dbReference type="HOGENOM" id="CLU_040204_0_0_1"/>
<dbReference type="InParanoid" id="P36528"/>
<dbReference type="OMA" id="HPFENAF"/>
<dbReference type="OrthoDB" id="414075at2759"/>
<dbReference type="BioCyc" id="YEAST:G3O-33249-MONOMER"/>
<dbReference type="BioGRID-ORCS" id="855469">
    <property type="hits" value="2 hits in 10 CRISPR screens"/>
</dbReference>
<dbReference type="PRO" id="PR:P36528"/>
<dbReference type="Proteomes" id="UP000002311">
    <property type="component" value="Chromosome XIV"/>
</dbReference>
<dbReference type="RNAct" id="P36528">
    <property type="molecule type" value="protein"/>
</dbReference>
<dbReference type="GO" id="GO:0005743">
    <property type="term" value="C:mitochondrial inner membrane"/>
    <property type="evidence" value="ECO:0000303"/>
    <property type="project" value="ComplexPortal"/>
</dbReference>
<dbReference type="GO" id="GO:0005762">
    <property type="term" value="C:mitochondrial large ribosomal subunit"/>
    <property type="evidence" value="ECO:0000314"/>
    <property type="project" value="SGD"/>
</dbReference>
<dbReference type="GO" id="GO:0005739">
    <property type="term" value="C:mitochondrion"/>
    <property type="evidence" value="ECO:0007005"/>
    <property type="project" value="SGD"/>
</dbReference>
<dbReference type="GO" id="GO:0003735">
    <property type="term" value="F:structural constituent of ribosome"/>
    <property type="evidence" value="ECO:0000314"/>
    <property type="project" value="SGD"/>
</dbReference>
<dbReference type="GO" id="GO:0032543">
    <property type="term" value="P:mitochondrial translation"/>
    <property type="evidence" value="ECO:0000303"/>
    <property type="project" value="ComplexPortal"/>
</dbReference>
<dbReference type="CDD" id="cd04661">
    <property type="entry name" value="NUDIX_MRP_L46"/>
    <property type="match status" value="1"/>
</dbReference>
<dbReference type="FunFam" id="3.90.79.10:FF:000081">
    <property type="entry name" value="54S ribosomal protein L17, mitochondrial"/>
    <property type="match status" value="1"/>
</dbReference>
<dbReference type="Gene3D" id="3.90.79.10">
    <property type="entry name" value="Nucleoside Triphosphate Pyrophosphohydrolase"/>
    <property type="match status" value="1"/>
</dbReference>
<dbReference type="InterPro" id="IPR040008">
    <property type="entry name" value="Ribosomal_mL46"/>
</dbReference>
<dbReference type="InterPro" id="IPR021757">
    <property type="entry name" value="Ribosomal_mL46_N"/>
</dbReference>
<dbReference type="InterPro" id="IPR033650">
    <property type="entry name" value="Ribosomal_mL46_NUDIX"/>
</dbReference>
<dbReference type="PANTHER" id="PTHR13124">
    <property type="entry name" value="39S RIBOSOMAL PROTEIN L46, MITOCHONDRIAL PRECURSOR-RELATED"/>
    <property type="match status" value="1"/>
</dbReference>
<dbReference type="PANTHER" id="PTHR13124:SF12">
    <property type="entry name" value="LARGE RIBOSOMAL SUBUNIT PROTEIN ML46"/>
    <property type="match status" value="1"/>
</dbReference>
<dbReference type="Pfam" id="PF11788">
    <property type="entry name" value="MRP-L46"/>
    <property type="match status" value="1"/>
</dbReference>
<sequence length="281" mass="32213">MKVNLMLKRGLATATATASSAPPKIKVGVLLSRIPIIKSELNELEKKYYEYQSELEKRLMWTFPAYFYFKKGTVAEHKFLSLQKGPISKKNGIWFPRGIPDIKHGRERSTKQEVKLSDDSTVAFSNNQKEQSKDDVNRPVIPNDRITEADRSNDMKSLERQLSRTLYLLVKDKSGTWKFPNFDLSDESKPLHVHAENELKLLSGDQIYTWSVSATPIGVLQDERNRTAEFIVKSHILAGKFDLVASKNDAFEDFAWLTKGEISEYVPKDYFNKTEFLLADN</sequence>
<evidence type="ECO:0000256" key="1">
    <source>
        <dbReference type="SAM" id="MobiDB-lite"/>
    </source>
</evidence>
<evidence type="ECO:0000269" key="2">
    <source>
    </source>
</evidence>
<evidence type="ECO:0000269" key="3">
    <source>
    </source>
</evidence>
<evidence type="ECO:0000269" key="4">
    <source>
    </source>
</evidence>
<evidence type="ECO:0000269" key="5">
    <source>
    </source>
</evidence>
<evidence type="ECO:0000269" key="6">
    <source>
    </source>
</evidence>
<evidence type="ECO:0000269" key="7">
    <source>
    </source>
</evidence>
<evidence type="ECO:0000269" key="8">
    <source>
    </source>
</evidence>
<evidence type="ECO:0000269" key="9">
    <source>
    </source>
</evidence>
<evidence type="ECO:0000303" key="10">
    <source>
    </source>
</evidence>
<evidence type="ECO:0000305" key="11"/>
<evidence type="ECO:0000305" key="12">
    <source>
    </source>
</evidence>
<evidence type="ECO:0000305" key="13">
    <source>
    </source>
</evidence>
<name>RM17_YEAST</name>